<feature type="chain" id="PRO_1000077146" description="ATP-dependent Clp protease ATP-binding subunit ClpX">
    <location>
        <begin position="1"/>
        <end position="424"/>
    </location>
</feature>
<feature type="domain" description="ClpX-type ZB" evidence="2">
    <location>
        <begin position="5"/>
        <end position="58"/>
    </location>
</feature>
<feature type="binding site" evidence="2">
    <location>
        <position position="17"/>
    </location>
    <ligand>
        <name>Zn(2+)</name>
        <dbReference type="ChEBI" id="CHEBI:29105"/>
    </ligand>
</feature>
<feature type="binding site" evidence="2">
    <location>
        <position position="20"/>
    </location>
    <ligand>
        <name>Zn(2+)</name>
        <dbReference type="ChEBI" id="CHEBI:29105"/>
    </ligand>
</feature>
<feature type="binding site" evidence="2">
    <location>
        <position position="39"/>
    </location>
    <ligand>
        <name>Zn(2+)</name>
        <dbReference type="ChEBI" id="CHEBI:29105"/>
    </ligand>
</feature>
<feature type="binding site" evidence="2">
    <location>
        <position position="42"/>
    </location>
    <ligand>
        <name>Zn(2+)</name>
        <dbReference type="ChEBI" id="CHEBI:29105"/>
    </ligand>
</feature>
<feature type="binding site" evidence="1">
    <location>
        <begin position="121"/>
        <end position="128"/>
    </location>
    <ligand>
        <name>ATP</name>
        <dbReference type="ChEBI" id="CHEBI:30616"/>
    </ligand>
</feature>
<organism>
    <name type="scientific">Brucella suis (strain ATCC 23445 / NCTC 10510)</name>
    <dbReference type="NCBI Taxonomy" id="470137"/>
    <lineage>
        <taxon>Bacteria</taxon>
        <taxon>Pseudomonadati</taxon>
        <taxon>Pseudomonadota</taxon>
        <taxon>Alphaproteobacteria</taxon>
        <taxon>Hyphomicrobiales</taxon>
        <taxon>Brucellaceae</taxon>
        <taxon>Brucella/Ochrobactrum group</taxon>
        <taxon>Brucella</taxon>
    </lineage>
</organism>
<evidence type="ECO:0000255" key="1">
    <source>
        <dbReference type="HAMAP-Rule" id="MF_00175"/>
    </source>
</evidence>
<evidence type="ECO:0000255" key="2">
    <source>
        <dbReference type="PROSITE-ProRule" id="PRU01250"/>
    </source>
</evidence>
<dbReference type="EMBL" id="CP000911">
    <property type="protein sequence ID" value="ABY38211.1"/>
    <property type="molecule type" value="Genomic_DNA"/>
</dbReference>
<dbReference type="RefSeq" id="WP_006070841.1">
    <property type="nucleotide sequence ID" value="NC_010169.1"/>
</dbReference>
<dbReference type="SMR" id="B0CGR0"/>
<dbReference type="GeneID" id="45052153"/>
<dbReference type="KEGG" id="bmt:BSUIS_A1157"/>
<dbReference type="HOGENOM" id="CLU_014218_8_2_5"/>
<dbReference type="Proteomes" id="UP000008545">
    <property type="component" value="Chromosome I"/>
</dbReference>
<dbReference type="GO" id="GO:0009376">
    <property type="term" value="C:HslUV protease complex"/>
    <property type="evidence" value="ECO:0007669"/>
    <property type="project" value="TreeGrafter"/>
</dbReference>
<dbReference type="GO" id="GO:0005524">
    <property type="term" value="F:ATP binding"/>
    <property type="evidence" value="ECO:0007669"/>
    <property type="project" value="UniProtKB-UniRule"/>
</dbReference>
<dbReference type="GO" id="GO:0016887">
    <property type="term" value="F:ATP hydrolysis activity"/>
    <property type="evidence" value="ECO:0007669"/>
    <property type="project" value="InterPro"/>
</dbReference>
<dbReference type="GO" id="GO:0140662">
    <property type="term" value="F:ATP-dependent protein folding chaperone"/>
    <property type="evidence" value="ECO:0007669"/>
    <property type="project" value="InterPro"/>
</dbReference>
<dbReference type="GO" id="GO:0046983">
    <property type="term" value="F:protein dimerization activity"/>
    <property type="evidence" value="ECO:0007669"/>
    <property type="project" value="InterPro"/>
</dbReference>
<dbReference type="GO" id="GO:0051082">
    <property type="term" value="F:unfolded protein binding"/>
    <property type="evidence" value="ECO:0007669"/>
    <property type="project" value="UniProtKB-UniRule"/>
</dbReference>
<dbReference type="GO" id="GO:0008270">
    <property type="term" value="F:zinc ion binding"/>
    <property type="evidence" value="ECO:0007669"/>
    <property type="project" value="InterPro"/>
</dbReference>
<dbReference type="GO" id="GO:0051301">
    <property type="term" value="P:cell division"/>
    <property type="evidence" value="ECO:0007669"/>
    <property type="project" value="TreeGrafter"/>
</dbReference>
<dbReference type="GO" id="GO:0051603">
    <property type="term" value="P:proteolysis involved in protein catabolic process"/>
    <property type="evidence" value="ECO:0007669"/>
    <property type="project" value="TreeGrafter"/>
</dbReference>
<dbReference type="CDD" id="cd19497">
    <property type="entry name" value="RecA-like_ClpX"/>
    <property type="match status" value="1"/>
</dbReference>
<dbReference type="FunFam" id="1.10.8.60:FF:000002">
    <property type="entry name" value="ATP-dependent Clp protease ATP-binding subunit ClpX"/>
    <property type="match status" value="1"/>
</dbReference>
<dbReference type="FunFam" id="3.40.50.300:FF:000005">
    <property type="entry name" value="ATP-dependent Clp protease ATP-binding subunit ClpX"/>
    <property type="match status" value="1"/>
</dbReference>
<dbReference type="Gene3D" id="1.10.8.60">
    <property type="match status" value="1"/>
</dbReference>
<dbReference type="Gene3D" id="6.20.220.10">
    <property type="entry name" value="ClpX chaperone, C4-type zinc finger domain"/>
    <property type="match status" value="1"/>
</dbReference>
<dbReference type="Gene3D" id="3.40.50.300">
    <property type="entry name" value="P-loop containing nucleotide triphosphate hydrolases"/>
    <property type="match status" value="1"/>
</dbReference>
<dbReference type="HAMAP" id="MF_00175">
    <property type="entry name" value="ClpX"/>
    <property type="match status" value="1"/>
</dbReference>
<dbReference type="InterPro" id="IPR003593">
    <property type="entry name" value="AAA+_ATPase"/>
</dbReference>
<dbReference type="InterPro" id="IPR050052">
    <property type="entry name" value="ATP-dep_Clp_protease_ClpX"/>
</dbReference>
<dbReference type="InterPro" id="IPR003959">
    <property type="entry name" value="ATPase_AAA_core"/>
</dbReference>
<dbReference type="InterPro" id="IPR019489">
    <property type="entry name" value="Clp_ATPase_C"/>
</dbReference>
<dbReference type="InterPro" id="IPR004487">
    <property type="entry name" value="Clp_protease_ATP-bd_su_ClpX"/>
</dbReference>
<dbReference type="InterPro" id="IPR046425">
    <property type="entry name" value="ClpX_bact"/>
</dbReference>
<dbReference type="InterPro" id="IPR027417">
    <property type="entry name" value="P-loop_NTPase"/>
</dbReference>
<dbReference type="InterPro" id="IPR010603">
    <property type="entry name" value="Znf_CppX_C4"/>
</dbReference>
<dbReference type="InterPro" id="IPR038366">
    <property type="entry name" value="Znf_CppX_C4_sf"/>
</dbReference>
<dbReference type="NCBIfam" id="TIGR00382">
    <property type="entry name" value="clpX"/>
    <property type="match status" value="1"/>
</dbReference>
<dbReference type="NCBIfam" id="NF003745">
    <property type="entry name" value="PRK05342.1"/>
    <property type="match status" value="1"/>
</dbReference>
<dbReference type="PANTHER" id="PTHR48102:SF7">
    <property type="entry name" value="ATP-DEPENDENT CLP PROTEASE ATP-BINDING SUBUNIT CLPX-LIKE, MITOCHONDRIAL"/>
    <property type="match status" value="1"/>
</dbReference>
<dbReference type="PANTHER" id="PTHR48102">
    <property type="entry name" value="ATP-DEPENDENT CLP PROTEASE ATP-BINDING SUBUNIT CLPX-LIKE, MITOCHONDRIAL-RELATED"/>
    <property type="match status" value="1"/>
</dbReference>
<dbReference type="Pfam" id="PF07724">
    <property type="entry name" value="AAA_2"/>
    <property type="match status" value="1"/>
</dbReference>
<dbReference type="Pfam" id="PF10431">
    <property type="entry name" value="ClpB_D2-small"/>
    <property type="match status" value="1"/>
</dbReference>
<dbReference type="Pfam" id="PF06689">
    <property type="entry name" value="zf-C4_ClpX"/>
    <property type="match status" value="1"/>
</dbReference>
<dbReference type="SMART" id="SM00382">
    <property type="entry name" value="AAA"/>
    <property type="match status" value="1"/>
</dbReference>
<dbReference type="SMART" id="SM01086">
    <property type="entry name" value="ClpB_D2-small"/>
    <property type="match status" value="1"/>
</dbReference>
<dbReference type="SMART" id="SM00994">
    <property type="entry name" value="zf-C4_ClpX"/>
    <property type="match status" value="1"/>
</dbReference>
<dbReference type="SUPFAM" id="SSF57716">
    <property type="entry name" value="Glucocorticoid receptor-like (DNA-binding domain)"/>
    <property type="match status" value="1"/>
</dbReference>
<dbReference type="SUPFAM" id="SSF52540">
    <property type="entry name" value="P-loop containing nucleoside triphosphate hydrolases"/>
    <property type="match status" value="1"/>
</dbReference>
<dbReference type="PROSITE" id="PS51902">
    <property type="entry name" value="CLPX_ZB"/>
    <property type="match status" value="1"/>
</dbReference>
<protein>
    <recommendedName>
        <fullName evidence="1">ATP-dependent Clp protease ATP-binding subunit ClpX</fullName>
    </recommendedName>
</protein>
<sequence length="424" mass="46636">MSKVSNGGGDSKNTLYCSFCGKSQHEVRKLIAGPTVFICDECVELCMDIIREENKSSMVKSREGVPTPQEIMAVLDDYVIGQKDAKRVLSVAVHNHYKRLAHQSKNSDIELAKSNILLVGPTGCGKTYLAQTLARIIDVPFIMADATTLTEAGYVGEDVENIILKLLQAADYNVERAQRGIVYIDEVDKISRKSDNPSITRDVSGEGVQQALLKIMEGTVASVPPQGGRKHPQQEFLQVDTTNILFICGGAFAGLDRIISARGEKTSIGFGATVKSVDERRIGEVFKELEPEDLLKFGLIPEFVGRLPVIATLEDLDVDALVQILTEPKNALVKQYQRLFDMENVELVFHDDALRAIANKAVEHKTGARGLRSIMEKILLDTMFELPTLEGVREVVISGDVVDGSARPLYIYAERQDEKGNVSA</sequence>
<accession>B0CGR0</accession>
<gene>
    <name evidence="1" type="primary">clpX</name>
    <name type="ordered locus">BSUIS_A1157</name>
</gene>
<comment type="function">
    <text evidence="1">ATP-dependent specificity component of the Clp protease. It directs the protease to specific substrates. Can perform chaperone functions in the absence of ClpP.</text>
</comment>
<comment type="subunit">
    <text evidence="1">Component of the ClpX-ClpP complex. Forms a hexameric ring that, in the presence of ATP, binds to fourteen ClpP subunits assembled into a disk-like structure with a central cavity, resembling the structure of eukaryotic proteasomes.</text>
</comment>
<comment type="similarity">
    <text evidence="1">Belongs to the ClpX chaperone family.</text>
</comment>
<reference key="1">
    <citation type="submission" date="2007-12" db="EMBL/GenBank/DDBJ databases">
        <title>Brucella suis ATCC 23445 whole genome shotgun sequencing project.</title>
        <authorList>
            <person name="Setubal J.C."/>
            <person name="Bowns C."/>
            <person name="Boyle S."/>
            <person name="Crasta O.R."/>
            <person name="Czar M.J."/>
            <person name="Dharmanolla C."/>
            <person name="Gillespie J.J."/>
            <person name="Kenyon R.W."/>
            <person name="Lu J."/>
            <person name="Mane S."/>
            <person name="Mohapatra S."/>
            <person name="Nagrani S."/>
            <person name="Purkayastha A."/>
            <person name="Rajasimha H.K."/>
            <person name="Shallom J.M."/>
            <person name="Shallom S."/>
            <person name="Shukla M."/>
            <person name="Snyder E.E."/>
            <person name="Sobral B.W."/>
            <person name="Wattam A.R."/>
            <person name="Will R."/>
            <person name="Williams K."/>
            <person name="Yoo H."/>
            <person name="Bruce D."/>
            <person name="Detter C."/>
            <person name="Munk C."/>
            <person name="Brettin T.S."/>
        </authorList>
    </citation>
    <scope>NUCLEOTIDE SEQUENCE [LARGE SCALE GENOMIC DNA]</scope>
    <source>
        <strain>ATCC 23445 / NCTC 10510</strain>
    </source>
</reference>
<name>CLPX_BRUSI</name>
<keyword id="KW-0067">ATP-binding</keyword>
<keyword id="KW-0143">Chaperone</keyword>
<keyword id="KW-0479">Metal-binding</keyword>
<keyword id="KW-0547">Nucleotide-binding</keyword>
<keyword id="KW-0862">Zinc</keyword>
<proteinExistence type="inferred from homology"/>